<name>UREG1_STRGG</name>
<comment type="function">
    <text evidence="1">Facilitates the functional incorporation of the urease nickel metallocenter. This process requires GTP hydrolysis, probably effectuated by UreG.</text>
</comment>
<comment type="subunit">
    <text evidence="1">Homodimer. UreD, UreF and UreG form a complex that acts as a GTP-hydrolysis-dependent molecular chaperone, activating the urease apoprotein by helping to assemble the nickel containing metallocenter of UreC. The UreE protein probably delivers the nickel.</text>
</comment>
<comment type="subcellular location">
    <subcellularLocation>
        <location evidence="1">Cytoplasm</location>
    </subcellularLocation>
</comment>
<comment type="similarity">
    <text evidence="1">Belongs to the SIMIBI class G3E GTPase family. UreG subfamily.</text>
</comment>
<keyword id="KW-0143">Chaperone</keyword>
<keyword id="KW-0963">Cytoplasm</keyword>
<keyword id="KW-0342">GTP-binding</keyword>
<keyword id="KW-0996">Nickel insertion</keyword>
<keyword id="KW-0547">Nucleotide-binding</keyword>
<dbReference type="EMBL" id="AP009493">
    <property type="protein sequence ID" value="BAG23128.1"/>
    <property type="molecule type" value="Genomic_DNA"/>
</dbReference>
<dbReference type="SMR" id="B1W5H1"/>
<dbReference type="KEGG" id="sgr:SGR_6299"/>
<dbReference type="eggNOG" id="COG0378">
    <property type="taxonomic scope" value="Bacteria"/>
</dbReference>
<dbReference type="HOGENOM" id="CLU_072144_1_0_11"/>
<dbReference type="Proteomes" id="UP000001685">
    <property type="component" value="Chromosome"/>
</dbReference>
<dbReference type="GO" id="GO:0005737">
    <property type="term" value="C:cytoplasm"/>
    <property type="evidence" value="ECO:0007669"/>
    <property type="project" value="UniProtKB-SubCell"/>
</dbReference>
<dbReference type="GO" id="GO:0005525">
    <property type="term" value="F:GTP binding"/>
    <property type="evidence" value="ECO:0007669"/>
    <property type="project" value="UniProtKB-KW"/>
</dbReference>
<dbReference type="GO" id="GO:0003924">
    <property type="term" value="F:GTPase activity"/>
    <property type="evidence" value="ECO:0007669"/>
    <property type="project" value="InterPro"/>
</dbReference>
<dbReference type="GO" id="GO:0016151">
    <property type="term" value="F:nickel cation binding"/>
    <property type="evidence" value="ECO:0007669"/>
    <property type="project" value="UniProtKB-UniRule"/>
</dbReference>
<dbReference type="GO" id="GO:0043419">
    <property type="term" value="P:urea catabolic process"/>
    <property type="evidence" value="ECO:0007669"/>
    <property type="project" value="InterPro"/>
</dbReference>
<dbReference type="CDD" id="cd05540">
    <property type="entry name" value="UreG"/>
    <property type="match status" value="1"/>
</dbReference>
<dbReference type="Gene3D" id="3.40.50.300">
    <property type="entry name" value="P-loop containing nucleotide triphosphate hydrolases"/>
    <property type="match status" value="1"/>
</dbReference>
<dbReference type="HAMAP" id="MF_01389">
    <property type="entry name" value="UreG"/>
    <property type="match status" value="1"/>
</dbReference>
<dbReference type="InterPro" id="IPR003495">
    <property type="entry name" value="CobW/HypB/UreG_nucleotide-bd"/>
</dbReference>
<dbReference type="InterPro" id="IPR027417">
    <property type="entry name" value="P-loop_NTPase"/>
</dbReference>
<dbReference type="InterPro" id="IPR004400">
    <property type="entry name" value="UreG"/>
</dbReference>
<dbReference type="NCBIfam" id="TIGR00101">
    <property type="entry name" value="ureG"/>
    <property type="match status" value="1"/>
</dbReference>
<dbReference type="PANTHER" id="PTHR31715">
    <property type="entry name" value="UREASE ACCESSORY PROTEIN G"/>
    <property type="match status" value="1"/>
</dbReference>
<dbReference type="PANTHER" id="PTHR31715:SF0">
    <property type="entry name" value="UREASE ACCESSORY PROTEIN G"/>
    <property type="match status" value="1"/>
</dbReference>
<dbReference type="Pfam" id="PF02492">
    <property type="entry name" value="cobW"/>
    <property type="match status" value="1"/>
</dbReference>
<dbReference type="PIRSF" id="PIRSF005624">
    <property type="entry name" value="Ni-bind_GTPase"/>
    <property type="match status" value="1"/>
</dbReference>
<dbReference type="SUPFAM" id="SSF52540">
    <property type="entry name" value="P-loop containing nucleoside triphosphate hydrolases"/>
    <property type="match status" value="1"/>
</dbReference>
<organism>
    <name type="scientific">Streptomyces griseus subsp. griseus (strain JCM 4626 / CBS 651.72 / NBRC 13350 / KCC S-0626 / ISP 5235)</name>
    <dbReference type="NCBI Taxonomy" id="455632"/>
    <lineage>
        <taxon>Bacteria</taxon>
        <taxon>Bacillati</taxon>
        <taxon>Actinomycetota</taxon>
        <taxon>Actinomycetes</taxon>
        <taxon>Kitasatosporales</taxon>
        <taxon>Streptomycetaceae</taxon>
        <taxon>Streptomyces</taxon>
    </lineage>
</organism>
<sequence>MTRTPTGVPMHLGHTHDAPAAVSADATRPDGTRRALRIGLGGPVGSGKTATVAALCRELRDRLSIAVVTNDIYTREDADFLLKNAVLPPERIQAVETGACPHTAIRDDISANLEAVEDLEDAVGPLDLILVESGGDNLTATFSKGLVDAQIFVIDVAGGDDIPRKGGPGVTTADLLVVNKTDLAPYVGSDLERMALDAKKQRGDLPVAFTSLTSAEGVGPVADWVRAQLAAWAA</sequence>
<accession>B1W5H1</accession>
<evidence type="ECO:0000255" key="1">
    <source>
        <dbReference type="HAMAP-Rule" id="MF_01389"/>
    </source>
</evidence>
<evidence type="ECO:0000256" key="2">
    <source>
        <dbReference type="SAM" id="MobiDB-lite"/>
    </source>
</evidence>
<proteinExistence type="inferred from homology"/>
<feature type="chain" id="PRO_0000347450" description="Urease accessory protein UreG 1">
    <location>
        <begin position="1"/>
        <end position="234"/>
    </location>
</feature>
<feature type="region of interest" description="Disordered" evidence="2">
    <location>
        <begin position="1"/>
        <end position="29"/>
    </location>
</feature>
<feature type="binding site" evidence="1">
    <location>
        <begin position="42"/>
        <end position="49"/>
    </location>
    <ligand>
        <name>GTP</name>
        <dbReference type="ChEBI" id="CHEBI:37565"/>
    </ligand>
</feature>
<reference key="1">
    <citation type="journal article" date="2008" name="J. Bacteriol.">
        <title>Genome sequence of the streptomycin-producing microorganism Streptomyces griseus IFO 13350.</title>
        <authorList>
            <person name="Ohnishi Y."/>
            <person name="Ishikawa J."/>
            <person name="Hara H."/>
            <person name="Suzuki H."/>
            <person name="Ikenoya M."/>
            <person name="Ikeda H."/>
            <person name="Yamashita A."/>
            <person name="Hattori M."/>
            <person name="Horinouchi S."/>
        </authorList>
    </citation>
    <scope>NUCLEOTIDE SEQUENCE [LARGE SCALE GENOMIC DNA]</scope>
    <source>
        <strain>JCM 4626 / CBS 651.72 / NBRC 13350 / KCC S-0626 / ISP 5235</strain>
    </source>
</reference>
<gene>
    <name evidence="1" type="primary">ureG1</name>
    <name type="ordered locus">SGR_6299</name>
</gene>
<protein>
    <recommendedName>
        <fullName evidence="1">Urease accessory protein UreG 1</fullName>
    </recommendedName>
</protein>